<comment type="function">
    <text evidence="2">May play a role in the degradation of mRNAs, both in normal mRNA turnover and in nonsense-mediated mRNA decay. May remove the 7-methyl guanine cap structure from mRNA molecules, yielding a 5'-phosphorylated mRNA fragment and 7m-GDP (By similarity).</text>
</comment>
<comment type="catalytic activity">
    <reaction evidence="2">
        <text>a 5'-end (N(7)-methyl 5'-triphosphoguanosine)-ribonucleoside in mRNA + H2O = N(7)-methyl-GDP + a 5'-end phospho-ribonucleoside in mRNA + 2 H(+)</text>
        <dbReference type="Rhea" id="RHEA:67484"/>
        <dbReference type="Rhea" id="RHEA-COMP:15692"/>
        <dbReference type="Rhea" id="RHEA-COMP:17167"/>
        <dbReference type="ChEBI" id="CHEBI:15377"/>
        <dbReference type="ChEBI" id="CHEBI:15378"/>
        <dbReference type="ChEBI" id="CHEBI:63714"/>
        <dbReference type="ChEBI" id="CHEBI:138282"/>
        <dbReference type="ChEBI" id="CHEBI:156461"/>
        <dbReference type="EC" id="3.6.1.62"/>
    </reaction>
    <physiologicalReaction direction="left-to-right" evidence="2">
        <dbReference type="Rhea" id="RHEA:67485"/>
    </physiologicalReaction>
</comment>
<comment type="subunit">
    <text evidence="1">Interacts with DCP1A.</text>
</comment>
<comment type="subcellular location">
    <subcellularLocation>
        <location evidence="1">Cytoplasm</location>
    </subcellularLocation>
    <subcellularLocation>
        <location evidence="2">Nucleus</location>
    </subcellularLocation>
</comment>
<comment type="similarity">
    <text evidence="4">Belongs to the DCP1 family.</text>
</comment>
<evidence type="ECO:0000250" key="1">
    <source>
        <dbReference type="UniProtKB" id="Q8IZD4"/>
    </source>
</evidence>
<evidence type="ECO:0000250" key="2">
    <source>
        <dbReference type="UniProtKB" id="Q9NPI6"/>
    </source>
</evidence>
<evidence type="ECO:0000256" key="3">
    <source>
        <dbReference type="SAM" id="MobiDB-lite"/>
    </source>
</evidence>
<evidence type="ECO:0000305" key="4"/>
<reference key="1">
    <citation type="submission" date="2005-08" db="EMBL/GenBank/DDBJ databases">
        <authorList>
            <consortium name="NIH - Mammalian Gene Collection (MGC) project"/>
        </authorList>
    </citation>
    <scope>NUCLEOTIDE SEQUENCE [LARGE SCALE MRNA]</scope>
    <source>
        <strain>Crossbred X Angus</strain>
        <tissue>Ileum</tissue>
    </source>
</reference>
<keyword id="KW-0963">Cytoplasm</keyword>
<keyword id="KW-0378">Hydrolase</keyword>
<keyword id="KW-0866">Nonsense-mediated mRNA decay</keyword>
<keyword id="KW-0539">Nucleus</keyword>
<keyword id="KW-0597">Phosphoprotein</keyword>
<keyword id="KW-1185">Reference proteome</keyword>
<proteinExistence type="evidence at transcript level"/>
<gene>
    <name type="primary">DCP1B</name>
</gene>
<accession>Q3SZL6</accession>
<sequence length="581" mass="62880">MAVAGGPAGKGRDISLAALRRHDPYISRIVDVASQVALYTFGHRANEWEKTDVEGTLFVYSRSASPKHGFTIMNRLSMENRTEPITKDLDFLLQDPFLLYRNARLSIYGIWFYDKEECQRIAELMKNLTQYEQLKAHHGTGAGASPVSLGSGEGKEADILRMLTKAKDEYTKCKTCSEPKQISSSSAIHDNPNLIKPIPVKPSGSRQQRGPRPGQTSDPEPQHLSLTALFGKQDKAPCQEATGPPQTLPLQQQQPEKFPMRQGVVRSLSYEEPRRPSPPVDKQLCPAIQKLMVRSMDLQPLAELPESRPCTDALRAACAGPAQTGSPRSHALAAPGTQKLLQVQSIPGAENRCEPGAPAPASSATTPVSLAQPTRLSSALPPQTPGPRALPRPAPPGPGPGHQPVTGPGEVSPRELLRRLQAVQQEQQLPAPGRPALAAKFPTATLSTRARNPLEPWRDPPPSTEQPAPLLQVLSPQRIPAAATPPPLMSPLVFAQPSWAPPQERSRAPLPPGNQDPAATPTGLLLPLRTPEPPGTPGSALSKLQLQEALLHLIQNDDNFLNIIYEAYLFSLTQAAVKKTL</sequence>
<protein>
    <recommendedName>
        <fullName>mRNA-decapping enzyme 1B</fullName>
        <ecNumber evidence="2">3.6.1.62</ecNumber>
    </recommendedName>
</protein>
<dbReference type="EC" id="3.6.1.62" evidence="2"/>
<dbReference type="EMBL" id="BC102799">
    <property type="protein sequence ID" value="AAI02800.1"/>
    <property type="molecule type" value="mRNA"/>
</dbReference>
<dbReference type="RefSeq" id="NP_001029639.1">
    <property type="nucleotide sequence ID" value="NM_001034467.2"/>
</dbReference>
<dbReference type="SMR" id="Q3SZL6"/>
<dbReference type="FunCoup" id="Q3SZL6">
    <property type="interactions" value="2437"/>
</dbReference>
<dbReference type="STRING" id="9913.ENSBTAP00000003353"/>
<dbReference type="iPTMnet" id="Q3SZL6"/>
<dbReference type="PaxDb" id="9913-ENSBTAP00000003353"/>
<dbReference type="GeneID" id="514548"/>
<dbReference type="KEGG" id="bta:514548"/>
<dbReference type="CTD" id="196513"/>
<dbReference type="eggNOG" id="KOG2868">
    <property type="taxonomic scope" value="Eukaryota"/>
</dbReference>
<dbReference type="InParanoid" id="Q3SZL6"/>
<dbReference type="OrthoDB" id="440673at2759"/>
<dbReference type="Proteomes" id="UP000009136">
    <property type="component" value="Unplaced"/>
</dbReference>
<dbReference type="GO" id="GO:0005634">
    <property type="term" value="C:nucleus"/>
    <property type="evidence" value="ECO:0007669"/>
    <property type="project" value="UniProtKB-SubCell"/>
</dbReference>
<dbReference type="GO" id="GO:0000932">
    <property type="term" value="C:P-body"/>
    <property type="evidence" value="ECO:0000318"/>
    <property type="project" value="GO_Central"/>
</dbReference>
<dbReference type="GO" id="GO:0140933">
    <property type="term" value="F:5'-(N(7)-methylguanosine 5'-triphospho)-[mRNA] hydrolase activity"/>
    <property type="evidence" value="ECO:0007669"/>
    <property type="project" value="RHEA"/>
</dbReference>
<dbReference type="GO" id="GO:0008047">
    <property type="term" value="F:enzyme activator activity"/>
    <property type="evidence" value="ECO:0007669"/>
    <property type="project" value="InterPro"/>
</dbReference>
<dbReference type="GO" id="GO:0003729">
    <property type="term" value="F:mRNA binding"/>
    <property type="evidence" value="ECO:0000318"/>
    <property type="project" value="GO_Central"/>
</dbReference>
<dbReference type="GO" id="GO:0000290">
    <property type="term" value="P:deadenylation-dependent decapping of nuclear-transcribed mRNA"/>
    <property type="evidence" value="ECO:0000318"/>
    <property type="project" value="GO_Central"/>
</dbReference>
<dbReference type="GO" id="GO:0031087">
    <property type="term" value="P:deadenylation-independent decapping of nuclear-transcribed mRNA"/>
    <property type="evidence" value="ECO:0000318"/>
    <property type="project" value="GO_Central"/>
</dbReference>
<dbReference type="GO" id="GO:0000184">
    <property type="term" value="P:nuclear-transcribed mRNA catabolic process, nonsense-mediated decay"/>
    <property type="evidence" value="ECO:0007669"/>
    <property type="project" value="UniProtKB-KW"/>
</dbReference>
<dbReference type="CDD" id="cd09804">
    <property type="entry name" value="Dcp1"/>
    <property type="match status" value="1"/>
</dbReference>
<dbReference type="FunFam" id="2.30.29.30:FF:000097">
    <property type="entry name" value="Putative mRNA-decapping enzyme 1A"/>
    <property type="match status" value="1"/>
</dbReference>
<dbReference type="Gene3D" id="6.10.140.2030">
    <property type="match status" value="1"/>
</dbReference>
<dbReference type="Gene3D" id="2.30.29.30">
    <property type="entry name" value="Pleckstrin-homology domain (PH domain)/Phosphotyrosine-binding domain (PTB)"/>
    <property type="match status" value="1"/>
</dbReference>
<dbReference type="InterPro" id="IPR010334">
    <property type="entry name" value="Dcp1"/>
</dbReference>
<dbReference type="InterPro" id="IPR031953">
    <property type="entry name" value="mRNA_decap_C"/>
</dbReference>
<dbReference type="InterPro" id="IPR011993">
    <property type="entry name" value="PH-like_dom_sf"/>
</dbReference>
<dbReference type="PANTHER" id="PTHR16290:SF5">
    <property type="entry name" value="MRNA-DECAPPING ENZYME 1B"/>
    <property type="match status" value="1"/>
</dbReference>
<dbReference type="PANTHER" id="PTHR16290">
    <property type="entry name" value="TRANSCRIPTION FACTOR SMIF DECAPPING ENZYME DCP1"/>
    <property type="match status" value="1"/>
</dbReference>
<dbReference type="Pfam" id="PF06058">
    <property type="entry name" value="DCP1"/>
    <property type="match status" value="1"/>
</dbReference>
<dbReference type="Pfam" id="PF16741">
    <property type="entry name" value="mRNA_decap_C"/>
    <property type="match status" value="1"/>
</dbReference>
<dbReference type="SUPFAM" id="SSF50729">
    <property type="entry name" value="PH domain-like"/>
    <property type="match status" value="1"/>
</dbReference>
<name>DCP1B_BOVIN</name>
<organism>
    <name type="scientific">Bos taurus</name>
    <name type="common">Bovine</name>
    <dbReference type="NCBI Taxonomy" id="9913"/>
    <lineage>
        <taxon>Eukaryota</taxon>
        <taxon>Metazoa</taxon>
        <taxon>Chordata</taxon>
        <taxon>Craniata</taxon>
        <taxon>Vertebrata</taxon>
        <taxon>Euteleostomi</taxon>
        <taxon>Mammalia</taxon>
        <taxon>Eutheria</taxon>
        <taxon>Laurasiatheria</taxon>
        <taxon>Artiodactyla</taxon>
        <taxon>Ruminantia</taxon>
        <taxon>Pecora</taxon>
        <taxon>Bovidae</taxon>
        <taxon>Bovinae</taxon>
        <taxon>Bos</taxon>
    </lineage>
</organism>
<feature type="chain" id="PRO_0000287717" description="mRNA-decapping enzyme 1B">
    <location>
        <begin position="1"/>
        <end position="581"/>
    </location>
</feature>
<feature type="region of interest" description="Disordered" evidence="3">
    <location>
        <begin position="181"/>
        <end position="222"/>
    </location>
</feature>
<feature type="region of interest" description="Disordered" evidence="3">
    <location>
        <begin position="236"/>
        <end position="258"/>
    </location>
</feature>
<feature type="region of interest" description="Disordered" evidence="3">
    <location>
        <begin position="349"/>
        <end position="411"/>
    </location>
</feature>
<feature type="region of interest" description="Disordered" evidence="3">
    <location>
        <begin position="427"/>
        <end position="468"/>
    </location>
</feature>
<feature type="region of interest" description="Disordered" evidence="3">
    <location>
        <begin position="498"/>
        <end position="522"/>
    </location>
</feature>
<feature type="compositionally biased region" description="Polar residues" evidence="3">
    <location>
        <begin position="204"/>
        <end position="219"/>
    </location>
</feature>
<feature type="compositionally biased region" description="Low complexity" evidence="3">
    <location>
        <begin position="244"/>
        <end position="255"/>
    </location>
</feature>
<feature type="compositionally biased region" description="Low complexity" evidence="3">
    <location>
        <begin position="355"/>
        <end position="367"/>
    </location>
</feature>
<feature type="compositionally biased region" description="Polar residues" evidence="3">
    <location>
        <begin position="368"/>
        <end position="381"/>
    </location>
</feature>
<feature type="compositionally biased region" description="Pro residues" evidence="3">
    <location>
        <begin position="382"/>
        <end position="401"/>
    </location>
</feature>
<feature type="modified residue" description="Phosphoserine" evidence="1">
    <location>
        <position position="145"/>
    </location>
</feature>
<feature type="modified residue" description="Phosphoserine" evidence="1">
    <location>
        <position position="269"/>
    </location>
</feature>
<feature type="modified residue" description="Phosphoserine" evidence="1">
    <location>
        <position position="326"/>
    </location>
</feature>
<feature type="modified residue" description="Phosphothreonine" evidence="1">
    <location>
        <position position="366"/>
    </location>
</feature>
<feature type="modified residue" description="Phosphoserine" evidence="1">
    <location>
        <position position="412"/>
    </location>
</feature>
<feature type="modified residue" description="Phosphoserine" evidence="1">
    <location>
        <position position="475"/>
    </location>
</feature>